<sequence length="90" mass="10335">MKMHQIPTPTMSQVIMLNDSITTAEFMVSALRDFFDKPLEEAQKLMLSIHRDGDGVCGVYPYEIAIYKAVCVRDKARARFPLRLMVQEVK</sequence>
<organism>
    <name type="scientific">Helicobacter pylori (strain J99 / ATCC 700824)</name>
    <name type="common">Campylobacter pylori J99</name>
    <dbReference type="NCBI Taxonomy" id="85963"/>
    <lineage>
        <taxon>Bacteria</taxon>
        <taxon>Pseudomonadati</taxon>
        <taxon>Campylobacterota</taxon>
        <taxon>Epsilonproteobacteria</taxon>
        <taxon>Campylobacterales</taxon>
        <taxon>Helicobacteraceae</taxon>
        <taxon>Helicobacter</taxon>
    </lineage>
</organism>
<evidence type="ECO:0000255" key="1">
    <source>
        <dbReference type="HAMAP-Rule" id="MF_00302"/>
    </source>
</evidence>
<proteinExistence type="inferred from homology"/>
<name>CLPS_HELPJ</name>
<comment type="function">
    <text evidence="1">Involved in the modulation of the specificity of the ClpAP-mediated ATP-dependent protein degradation.</text>
</comment>
<comment type="subunit">
    <text evidence="1">Binds to the N-terminal domain of the chaperone ClpA.</text>
</comment>
<comment type="similarity">
    <text evidence="1">Belongs to the ClpS family.</text>
</comment>
<accession>Q9ZN32</accession>
<protein>
    <recommendedName>
        <fullName evidence="1">ATP-dependent Clp protease adapter protein ClpS</fullName>
    </recommendedName>
</protein>
<dbReference type="EMBL" id="AE001439">
    <property type="protein sequence ID" value="AAD05612.1"/>
    <property type="molecule type" value="Genomic_DNA"/>
</dbReference>
<dbReference type="PIR" id="B71983">
    <property type="entry name" value="B71983"/>
</dbReference>
<dbReference type="RefSeq" id="WP_000781796.1">
    <property type="nucleotide sequence ID" value="NC_000921.1"/>
</dbReference>
<dbReference type="SMR" id="Q9ZN32"/>
<dbReference type="IntAct" id="Q9ZN32">
    <property type="interactions" value="10"/>
</dbReference>
<dbReference type="KEGG" id="hpj:jhp_0028"/>
<dbReference type="PATRIC" id="fig|85963.30.peg.1012"/>
<dbReference type="eggNOG" id="COG2127">
    <property type="taxonomic scope" value="Bacteria"/>
</dbReference>
<dbReference type="Proteomes" id="UP000000804">
    <property type="component" value="Chromosome"/>
</dbReference>
<dbReference type="GO" id="GO:0030163">
    <property type="term" value="P:protein catabolic process"/>
    <property type="evidence" value="ECO:0007669"/>
    <property type="project" value="InterPro"/>
</dbReference>
<dbReference type="GO" id="GO:0006508">
    <property type="term" value="P:proteolysis"/>
    <property type="evidence" value="ECO:0007669"/>
    <property type="project" value="UniProtKB-UniRule"/>
</dbReference>
<dbReference type="Gene3D" id="3.30.1390.10">
    <property type="match status" value="1"/>
</dbReference>
<dbReference type="HAMAP" id="MF_00302">
    <property type="entry name" value="ClpS"/>
    <property type="match status" value="1"/>
</dbReference>
<dbReference type="InterPro" id="IPR022935">
    <property type="entry name" value="ClpS"/>
</dbReference>
<dbReference type="InterPro" id="IPR003769">
    <property type="entry name" value="ClpS_core"/>
</dbReference>
<dbReference type="InterPro" id="IPR014719">
    <property type="entry name" value="Ribosomal_bL12_C/ClpS-like"/>
</dbReference>
<dbReference type="Pfam" id="PF02617">
    <property type="entry name" value="ClpS"/>
    <property type="match status" value="1"/>
</dbReference>
<dbReference type="SUPFAM" id="SSF54736">
    <property type="entry name" value="ClpS-like"/>
    <property type="match status" value="1"/>
</dbReference>
<gene>
    <name evidence="1" type="primary">clpS</name>
    <name type="ordered locus">jhp_0028</name>
</gene>
<feature type="chain" id="PRO_0000215714" description="ATP-dependent Clp protease adapter protein ClpS">
    <location>
        <begin position="1"/>
        <end position="90"/>
    </location>
</feature>
<reference key="1">
    <citation type="journal article" date="1999" name="Nature">
        <title>Genomic sequence comparison of two unrelated isolates of the human gastric pathogen Helicobacter pylori.</title>
        <authorList>
            <person name="Alm R.A."/>
            <person name="Ling L.-S.L."/>
            <person name="Moir D.T."/>
            <person name="King B.L."/>
            <person name="Brown E.D."/>
            <person name="Doig P.C."/>
            <person name="Smith D.R."/>
            <person name="Noonan B."/>
            <person name="Guild B.C."/>
            <person name="deJonge B.L."/>
            <person name="Carmel G."/>
            <person name="Tummino P.J."/>
            <person name="Caruso A."/>
            <person name="Uria-Nickelsen M."/>
            <person name="Mills D.M."/>
            <person name="Ives C."/>
            <person name="Gibson R."/>
            <person name="Merberg D."/>
            <person name="Mills S.D."/>
            <person name="Jiang Q."/>
            <person name="Taylor D.E."/>
            <person name="Vovis G.F."/>
            <person name="Trust T.J."/>
        </authorList>
    </citation>
    <scope>NUCLEOTIDE SEQUENCE [LARGE SCALE GENOMIC DNA]</scope>
    <source>
        <strain>J99 / ATCC 700824</strain>
    </source>
</reference>